<evidence type="ECO:0000255" key="1">
    <source>
        <dbReference type="HAMAP-Rule" id="MF_00235"/>
    </source>
</evidence>
<organism>
    <name type="scientific">Archaeoglobus fulgidus (strain ATCC 49558 / DSM 4304 / JCM 9628 / NBRC 100126 / VC-16)</name>
    <dbReference type="NCBI Taxonomy" id="224325"/>
    <lineage>
        <taxon>Archaea</taxon>
        <taxon>Methanobacteriati</taxon>
        <taxon>Methanobacteriota</taxon>
        <taxon>Archaeoglobi</taxon>
        <taxon>Archaeoglobales</taxon>
        <taxon>Archaeoglobaceae</taxon>
        <taxon>Archaeoglobus</taxon>
    </lineage>
</organism>
<sequence length="217" mass="24703">MNLIFLGPPGAGKGTQAKRVSEKYGIPQISTGDMLREAVAKGTELGKKAKEYMDKGELVPDEVVIGIVKERLQQPDCEKGFILDGFPRTLAQAEALDEMLKELNKKIDAVINVVVPEEEVVKRITYRRTCRNCGAVYHLIYAPPKEDNKCDKCGGELYQRDDDKEETVRERYRVYKQNTEPLIDYYRKKGILYDVDGTKDIEGVWKEIEAILEKIKS</sequence>
<feature type="chain" id="PRO_0000158896" description="Adenylate kinase">
    <location>
        <begin position="1"/>
        <end position="217"/>
    </location>
</feature>
<feature type="region of interest" description="NMP" evidence="1">
    <location>
        <begin position="30"/>
        <end position="59"/>
    </location>
</feature>
<feature type="region of interest" description="LID" evidence="1">
    <location>
        <begin position="126"/>
        <end position="163"/>
    </location>
</feature>
<feature type="binding site" evidence="1">
    <location>
        <begin position="10"/>
        <end position="15"/>
    </location>
    <ligand>
        <name>ATP</name>
        <dbReference type="ChEBI" id="CHEBI:30616"/>
    </ligand>
</feature>
<feature type="binding site" evidence="1">
    <location>
        <position position="31"/>
    </location>
    <ligand>
        <name>AMP</name>
        <dbReference type="ChEBI" id="CHEBI:456215"/>
    </ligand>
</feature>
<feature type="binding site" evidence="1">
    <location>
        <position position="36"/>
    </location>
    <ligand>
        <name>AMP</name>
        <dbReference type="ChEBI" id="CHEBI:456215"/>
    </ligand>
</feature>
<feature type="binding site" evidence="1">
    <location>
        <begin position="57"/>
        <end position="59"/>
    </location>
    <ligand>
        <name>AMP</name>
        <dbReference type="ChEBI" id="CHEBI:456215"/>
    </ligand>
</feature>
<feature type="binding site" evidence="1">
    <location>
        <begin position="85"/>
        <end position="88"/>
    </location>
    <ligand>
        <name>AMP</name>
        <dbReference type="ChEBI" id="CHEBI:456215"/>
    </ligand>
</feature>
<feature type="binding site" evidence="1">
    <location>
        <position position="92"/>
    </location>
    <ligand>
        <name>AMP</name>
        <dbReference type="ChEBI" id="CHEBI:456215"/>
    </ligand>
</feature>
<feature type="binding site" evidence="1">
    <location>
        <position position="127"/>
    </location>
    <ligand>
        <name>ATP</name>
        <dbReference type="ChEBI" id="CHEBI:30616"/>
    </ligand>
</feature>
<feature type="binding site" evidence="1">
    <location>
        <position position="130"/>
    </location>
    <ligand>
        <name>Zn(2+)</name>
        <dbReference type="ChEBI" id="CHEBI:29105"/>
        <note>structural</note>
    </ligand>
</feature>
<feature type="binding site" evidence="1">
    <location>
        <position position="133"/>
    </location>
    <ligand>
        <name>Zn(2+)</name>
        <dbReference type="ChEBI" id="CHEBI:29105"/>
        <note>structural</note>
    </ligand>
</feature>
<feature type="binding site" evidence="1">
    <location>
        <begin position="136"/>
        <end position="137"/>
    </location>
    <ligand>
        <name>ATP</name>
        <dbReference type="ChEBI" id="CHEBI:30616"/>
    </ligand>
</feature>
<feature type="binding site" evidence="1">
    <location>
        <position position="150"/>
    </location>
    <ligand>
        <name>Zn(2+)</name>
        <dbReference type="ChEBI" id="CHEBI:29105"/>
        <note>structural</note>
    </ligand>
</feature>
<feature type="binding site" evidence="1">
    <location>
        <position position="153"/>
    </location>
    <ligand>
        <name>Zn(2+)</name>
        <dbReference type="ChEBI" id="CHEBI:29105"/>
        <note>structural</note>
    </ligand>
</feature>
<feature type="binding site" evidence="1">
    <location>
        <position position="160"/>
    </location>
    <ligand>
        <name>AMP</name>
        <dbReference type="ChEBI" id="CHEBI:456215"/>
    </ligand>
</feature>
<feature type="binding site" evidence="1">
    <location>
        <position position="171"/>
    </location>
    <ligand>
        <name>AMP</name>
        <dbReference type="ChEBI" id="CHEBI:456215"/>
    </ligand>
</feature>
<feature type="binding site" evidence="1">
    <location>
        <position position="199"/>
    </location>
    <ligand>
        <name>ATP</name>
        <dbReference type="ChEBI" id="CHEBI:30616"/>
    </ligand>
</feature>
<accession>O29581</accession>
<gene>
    <name evidence="1" type="primary">adk</name>
    <name type="ordered locus">AF_0676</name>
</gene>
<comment type="function">
    <text evidence="1">Catalyzes the reversible transfer of the terminal phosphate group between ATP and AMP. Plays an important role in cellular energy homeostasis and in adenine nucleotide metabolism.</text>
</comment>
<comment type="catalytic activity">
    <reaction evidence="1">
        <text>AMP + ATP = 2 ADP</text>
        <dbReference type="Rhea" id="RHEA:12973"/>
        <dbReference type="ChEBI" id="CHEBI:30616"/>
        <dbReference type="ChEBI" id="CHEBI:456215"/>
        <dbReference type="ChEBI" id="CHEBI:456216"/>
        <dbReference type="EC" id="2.7.4.3"/>
    </reaction>
</comment>
<comment type="pathway">
    <text evidence="1">Purine metabolism; AMP biosynthesis via salvage pathway; AMP from ADP: step 1/1.</text>
</comment>
<comment type="subunit">
    <text evidence="1">Monomer.</text>
</comment>
<comment type="subcellular location">
    <subcellularLocation>
        <location evidence="1">Cytoplasm</location>
    </subcellularLocation>
</comment>
<comment type="domain">
    <text evidence="1">Consists of three domains, a large central CORE domain and two small peripheral domains, NMPbind and LID, which undergo movements during catalysis. The LID domain closes over the site of phosphoryl transfer upon ATP binding. Assembling and dissambling the active center during each catalytic cycle provides an effective means to prevent ATP hydrolysis. Some bacteria have evolved a zinc-coordinating structure that stabilizes the LID domain.</text>
</comment>
<comment type="similarity">
    <text evidence="1">Belongs to the adenylate kinase family.</text>
</comment>
<proteinExistence type="inferred from homology"/>
<dbReference type="EC" id="2.7.4.3" evidence="1"/>
<dbReference type="EMBL" id="AE000782">
    <property type="protein sequence ID" value="AAB90565.1"/>
    <property type="molecule type" value="Genomic_DNA"/>
</dbReference>
<dbReference type="PIR" id="D69334">
    <property type="entry name" value="D69334"/>
</dbReference>
<dbReference type="RefSeq" id="WP_010878179.1">
    <property type="nucleotide sequence ID" value="NC_000917.1"/>
</dbReference>
<dbReference type="SMR" id="O29581"/>
<dbReference type="STRING" id="224325.AF_0676"/>
<dbReference type="PaxDb" id="224325-AF_0676"/>
<dbReference type="EnsemblBacteria" id="AAB90565">
    <property type="protein sequence ID" value="AAB90565"/>
    <property type="gene ID" value="AF_0676"/>
</dbReference>
<dbReference type="KEGG" id="afu:AF_0676"/>
<dbReference type="eggNOG" id="arCOG01046">
    <property type="taxonomic scope" value="Archaea"/>
</dbReference>
<dbReference type="HOGENOM" id="CLU_032354_1_2_2"/>
<dbReference type="OrthoDB" id="31230at2157"/>
<dbReference type="PhylomeDB" id="O29581"/>
<dbReference type="UniPathway" id="UPA00588">
    <property type="reaction ID" value="UER00649"/>
</dbReference>
<dbReference type="Proteomes" id="UP000002199">
    <property type="component" value="Chromosome"/>
</dbReference>
<dbReference type="GO" id="GO:0005737">
    <property type="term" value="C:cytoplasm"/>
    <property type="evidence" value="ECO:0007669"/>
    <property type="project" value="UniProtKB-SubCell"/>
</dbReference>
<dbReference type="GO" id="GO:0004017">
    <property type="term" value="F:adenylate kinase activity"/>
    <property type="evidence" value="ECO:0007669"/>
    <property type="project" value="UniProtKB-UniRule"/>
</dbReference>
<dbReference type="GO" id="GO:0005524">
    <property type="term" value="F:ATP binding"/>
    <property type="evidence" value="ECO:0007669"/>
    <property type="project" value="UniProtKB-UniRule"/>
</dbReference>
<dbReference type="GO" id="GO:0008270">
    <property type="term" value="F:zinc ion binding"/>
    <property type="evidence" value="ECO:0007669"/>
    <property type="project" value="UniProtKB-UniRule"/>
</dbReference>
<dbReference type="GO" id="GO:0044209">
    <property type="term" value="P:AMP salvage"/>
    <property type="evidence" value="ECO:0007669"/>
    <property type="project" value="UniProtKB-UniRule"/>
</dbReference>
<dbReference type="CDD" id="cd01428">
    <property type="entry name" value="ADK"/>
    <property type="match status" value="1"/>
</dbReference>
<dbReference type="FunFam" id="3.40.50.300:FF:000106">
    <property type="entry name" value="Adenylate kinase mitochondrial"/>
    <property type="match status" value="1"/>
</dbReference>
<dbReference type="Gene3D" id="3.40.50.300">
    <property type="entry name" value="P-loop containing nucleotide triphosphate hydrolases"/>
    <property type="match status" value="1"/>
</dbReference>
<dbReference type="HAMAP" id="MF_00235">
    <property type="entry name" value="Adenylate_kinase_Adk"/>
    <property type="match status" value="1"/>
</dbReference>
<dbReference type="InterPro" id="IPR006259">
    <property type="entry name" value="Adenyl_kin_sub"/>
</dbReference>
<dbReference type="InterPro" id="IPR000850">
    <property type="entry name" value="Adenylat/UMP-CMP_kin"/>
</dbReference>
<dbReference type="InterPro" id="IPR033690">
    <property type="entry name" value="Adenylat_kinase_CS"/>
</dbReference>
<dbReference type="InterPro" id="IPR007862">
    <property type="entry name" value="Adenylate_kinase_lid-dom"/>
</dbReference>
<dbReference type="InterPro" id="IPR027417">
    <property type="entry name" value="P-loop_NTPase"/>
</dbReference>
<dbReference type="NCBIfam" id="TIGR01351">
    <property type="entry name" value="adk"/>
    <property type="match status" value="1"/>
</dbReference>
<dbReference type="NCBIfam" id="NF001379">
    <property type="entry name" value="PRK00279.1-1"/>
    <property type="match status" value="1"/>
</dbReference>
<dbReference type="NCBIfam" id="NF001380">
    <property type="entry name" value="PRK00279.1-2"/>
    <property type="match status" value="1"/>
</dbReference>
<dbReference type="NCBIfam" id="NF001381">
    <property type="entry name" value="PRK00279.1-3"/>
    <property type="match status" value="1"/>
</dbReference>
<dbReference type="NCBIfam" id="NF001386">
    <property type="entry name" value="PRK00279.2-4"/>
    <property type="match status" value="1"/>
</dbReference>
<dbReference type="NCBIfam" id="NF011100">
    <property type="entry name" value="PRK14527.1"/>
    <property type="match status" value="1"/>
</dbReference>
<dbReference type="NCBIfam" id="NF011105">
    <property type="entry name" value="PRK14532.1"/>
    <property type="match status" value="1"/>
</dbReference>
<dbReference type="PANTHER" id="PTHR23359">
    <property type="entry name" value="NUCLEOTIDE KINASE"/>
    <property type="match status" value="1"/>
</dbReference>
<dbReference type="Pfam" id="PF00406">
    <property type="entry name" value="ADK"/>
    <property type="match status" value="1"/>
</dbReference>
<dbReference type="Pfam" id="PF05191">
    <property type="entry name" value="ADK_lid"/>
    <property type="match status" value="1"/>
</dbReference>
<dbReference type="PRINTS" id="PR00094">
    <property type="entry name" value="ADENYLTKNASE"/>
</dbReference>
<dbReference type="SUPFAM" id="SSF52540">
    <property type="entry name" value="P-loop containing nucleoside triphosphate hydrolases"/>
    <property type="match status" value="1"/>
</dbReference>
<dbReference type="PROSITE" id="PS00113">
    <property type="entry name" value="ADENYLATE_KINASE"/>
    <property type="match status" value="1"/>
</dbReference>
<keyword id="KW-0067">ATP-binding</keyword>
<keyword id="KW-0963">Cytoplasm</keyword>
<keyword id="KW-0418">Kinase</keyword>
<keyword id="KW-0479">Metal-binding</keyword>
<keyword id="KW-0545">Nucleotide biosynthesis</keyword>
<keyword id="KW-0547">Nucleotide-binding</keyword>
<keyword id="KW-1185">Reference proteome</keyword>
<keyword id="KW-0808">Transferase</keyword>
<keyword id="KW-0862">Zinc</keyword>
<name>KAD_ARCFU</name>
<reference key="1">
    <citation type="journal article" date="1997" name="Nature">
        <title>The complete genome sequence of the hyperthermophilic, sulphate-reducing archaeon Archaeoglobus fulgidus.</title>
        <authorList>
            <person name="Klenk H.-P."/>
            <person name="Clayton R.A."/>
            <person name="Tomb J.-F."/>
            <person name="White O."/>
            <person name="Nelson K.E."/>
            <person name="Ketchum K.A."/>
            <person name="Dodson R.J."/>
            <person name="Gwinn M.L."/>
            <person name="Hickey E.K."/>
            <person name="Peterson J.D."/>
            <person name="Richardson D.L."/>
            <person name="Kerlavage A.R."/>
            <person name="Graham D.E."/>
            <person name="Kyrpides N.C."/>
            <person name="Fleischmann R.D."/>
            <person name="Quackenbush J."/>
            <person name="Lee N.H."/>
            <person name="Sutton G.G."/>
            <person name="Gill S.R."/>
            <person name="Kirkness E.F."/>
            <person name="Dougherty B.A."/>
            <person name="McKenney K."/>
            <person name="Adams M.D."/>
            <person name="Loftus B.J."/>
            <person name="Peterson S.N."/>
            <person name="Reich C.I."/>
            <person name="McNeil L.K."/>
            <person name="Badger J.H."/>
            <person name="Glodek A."/>
            <person name="Zhou L."/>
            <person name="Overbeek R."/>
            <person name="Gocayne J.D."/>
            <person name="Weidman J.F."/>
            <person name="McDonald L.A."/>
            <person name="Utterback T.R."/>
            <person name="Cotton M.D."/>
            <person name="Spriggs T."/>
            <person name="Artiach P."/>
            <person name="Kaine B.P."/>
            <person name="Sykes S.M."/>
            <person name="Sadow P.W."/>
            <person name="D'Andrea K.P."/>
            <person name="Bowman C."/>
            <person name="Fujii C."/>
            <person name="Garland S.A."/>
            <person name="Mason T.M."/>
            <person name="Olsen G.J."/>
            <person name="Fraser C.M."/>
            <person name="Smith H.O."/>
            <person name="Woese C.R."/>
            <person name="Venter J.C."/>
        </authorList>
    </citation>
    <scope>NUCLEOTIDE SEQUENCE [LARGE SCALE GENOMIC DNA]</scope>
    <source>
        <strain>ATCC 49558 / DSM 4304 / JCM 9628 / NBRC 100126 / VC-16</strain>
    </source>
</reference>
<protein>
    <recommendedName>
        <fullName evidence="1">Adenylate kinase</fullName>
        <shortName evidence="1">AK</shortName>
        <ecNumber evidence="1">2.7.4.3</ecNumber>
    </recommendedName>
    <alternativeName>
        <fullName evidence="1">ATP-AMP transphosphorylase</fullName>
    </alternativeName>
    <alternativeName>
        <fullName evidence="1">ATP:AMP phosphotransferase</fullName>
    </alternativeName>
    <alternativeName>
        <fullName evidence="1">Adenylate monophosphate kinase</fullName>
    </alternativeName>
</protein>